<sequence length="452" mass="51322">MEVTTRLTWNDENHLRKLLGNVSLSLLYKSSVHGGSIEDMVERCSRQGCTITMAYIDYNMIVAFMLGNYINLHESSTEPNDSLWFSLQKKNDTTEIETLLLNTAPKIIDEQLVCRLSKTDIFIICRDNKIYLDKMITRNLKLRFYGHRQYLECEVFRVEGIKDNLDDIKRIIKAREHRNRLLADIRDYRPYADLVSEIRILLVGPVGSGKSSFFNSVKSIFHGHVTGQAVVGSDITSITERYRIYSVKDGKNGKSLPFMLCDTMGLDGAEGAGLCMDDIPHILKGCMPDRYQFNSRKPITPEHSTFITSPSLKDRIHCVAYVLDINSIDNLYSKMLAKVKQVHKEVLNCGIAYVALLTKVDDCSEVLQDNFLNMSRSMTSQSRVMNVHKMLGIPISNILMVGNYASDLELDPMKDILILSALRQMLRAADDFLEDLPLEETGAIERALQPCI</sequence>
<reference key="1">
    <citation type="submission" date="1996-12" db="EMBL/GenBank/DDBJ databases">
        <title>The cloning of a cDNA for novel genes expressed in human osteoblast.</title>
        <authorList>
            <person name="Ohno I."/>
            <person name="Hashimoto J."/>
            <person name="Takaoka K."/>
            <person name="Ochi T."/>
            <person name="Okubo K."/>
            <person name="Matsubara K."/>
        </authorList>
    </citation>
    <scope>NUCLEOTIDE SEQUENCE [MRNA] (ISOFORM 1)</scope>
    <scope>VARIANTS ARG-73 AND THR-235</scope>
    <source>
        <tissue>Cancellous bone</tissue>
    </source>
</reference>
<reference key="2">
    <citation type="submission" date="2005-04" db="EMBL/GenBank/DDBJ databases">
        <authorList>
            <person name="Suzuki Y."/>
            <person name="Sugano S."/>
            <person name="Totoki Y."/>
            <person name="Toyoda A."/>
            <person name="Takeda T."/>
            <person name="Sakaki Y."/>
            <person name="Tanaka A."/>
            <person name="Yokoyama S."/>
        </authorList>
    </citation>
    <scope>NUCLEOTIDE SEQUENCE [LARGE SCALE MRNA] (ISOFORM 1)</scope>
    <scope>VARIANTS ARG-73; ILE-217 AND CYS-296</scope>
</reference>
<reference key="3">
    <citation type="journal article" date="2007" name="BMC Genomics">
        <title>The full-ORF clone resource of the German cDNA consortium.</title>
        <authorList>
            <person name="Bechtel S."/>
            <person name="Rosenfelder H."/>
            <person name="Duda A."/>
            <person name="Schmidt C.P."/>
            <person name="Ernst U."/>
            <person name="Wellenreuther R."/>
            <person name="Mehrle A."/>
            <person name="Schuster C."/>
            <person name="Bahr A."/>
            <person name="Bloecker H."/>
            <person name="Heubner D."/>
            <person name="Hoerlein A."/>
            <person name="Michel G."/>
            <person name="Wedler H."/>
            <person name="Koehrer K."/>
            <person name="Ottenwaelder B."/>
            <person name="Poustka A."/>
            <person name="Wiemann S."/>
            <person name="Schupp I."/>
        </authorList>
    </citation>
    <scope>NUCLEOTIDE SEQUENCE [LARGE SCALE MRNA] (ISOFORM 2)</scope>
    <scope>VARIANT ARG-73</scope>
    <source>
        <tissue>Spinal cord</tissue>
    </source>
</reference>
<reference key="4">
    <citation type="journal article" date="2006" name="Nature">
        <title>The DNA sequence and biological annotation of human chromosome 1.</title>
        <authorList>
            <person name="Gregory S.G."/>
            <person name="Barlow K.F."/>
            <person name="McLay K.E."/>
            <person name="Kaul R."/>
            <person name="Swarbreck D."/>
            <person name="Dunham A."/>
            <person name="Scott C.E."/>
            <person name="Howe K.L."/>
            <person name="Woodfine K."/>
            <person name="Spencer C.C.A."/>
            <person name="Jones M.C."/>
            <person name="Gillson C."/>
            <person name="Searle S."/>
            <person name="Zhou Y."/>
            <person name="Kokocinski F."/>
            <person name="McDonald L."/>
            <person name="Evans R."/>
            <person name="Phillips K."/>
            <person name="Atkinson A."/>
            <person name="Cooper R."/>
            <person name="Jones C."/>
            <person name="Hall R.E."/>
            <person name="Andrews T.D."/>
            <person name="Lloyd C."/>
            <person name="Ainscough R."/>
            <person name="Almeida J.P."/>
            <person name="Ambrose K.D."/>
            <person name="Anderson F."/>
            <person name="Andrew R.W."/>
            <person name="Ashwell R.I.S."/>
            <person name="Aubin K."/>
            <person name="Babbage A.K."/>
            <person name="Bagguley C.L."/>
            <person name="Bailey J."/>
            <person name="Beasley H."/>
            <person name="Bethel G."/>
            <person name="Bird C.P."/>
            <person name="Bray-Allen S."/>
            <person name="Brown J.Y."/>
            <person name="Brown A.J."/>
            <person name="Buckley D."/>
            <person name="Burton J."/>
            <person name="Bye J."/>
            <person name="Carder C."/>
            <person name="Chapman J.C."/>
            <person name="Clark S.Y."/>
            <person name="Clarke G."/>
            <person name="Clee C."/>
            <person name="Cobley V."/>
            <person name="Collier R.E."/>
            <person name="Corby N."/>
            <person name="Coville G.J."/>
            <person name="Davies J."/>
            <person name="Deadman R."/>
            <person name="Dunn M."/>
            <person name="Earthrowl M."/>
            <person name="Ellington A.G."/>
            <person name="Errington H."/>
            <person name="Frankish A."/>
            <person name="Frankland J."/>
            <person name="French L."/>
            <person name="Garner P."/>
            <person name="Garnett J."/>
            <person name="Gay L."/>
            <person name="Ghori M.R.J."/>
            <person name="Gibson R."/>
            <person name="Gilby L.M."/>
            <person name="Gillett W."/>
            <person name="Glithero R.J."/>
            <person name="Grafham D.V."/>
            <person name="Griffiths C."/>
            <person name="Griffiths-Jones S."/>
            <person name="Grocock R."/>
            <person name="Hammond S."/>
            <person name="Harrison E.S.I."/>
            <person name="Hart E."/>
            <person name="Haugen E."/>
            <person name="Heath P.D."/>
            <person name="Holmes S."/>
            <person name="Holt K."/>
            <person name="Howden P.J."/>
            <person name="Hunt A.R."/>
            <person name="Hunt S.E."/>
            <person name="Hunter G."/>
            <person name="Isherwood J."/>
            <person name="James R."/>
            <person name="Johnson C."/>
            <person name="Johnson D."/>
            <person name="Joy A."/>
            <person name="Kay M."/>
            <person name="Kershaw J.K."/>
            <person name="Kibukawa M."/>
            <person name="Kimberley A.M."/>
            <person name="King A."/>
            <person name="Knights A.J."/>
            <person name="Lad H."/>
            <person name="Laird G."/>
            <person name="Lawlor S."/>
            <person name="Leongamornlert D.A."/>
            <person name="Lloyd D.M."/>
            <person name="Loveland J."/>
            <person name="Lovell J."/>
            <person name="Lush M.J."/>
            <person name="Lyne R."/>
            <person name="Martin S."/>
            <person name="Mashreghi-Mohammadi M."/>
            <person name="Matthews L."/>
            <person name="Matthews N.S.W."/>
            <person name="McLaren S."/>
            <person name="Milne S."/>
            <person name="Mistry S."/>
            <person name="Moore M.J.F."/>
            <person name="Nickerson T."/>
            <person name="O'Dell C.N."/>
            <person name="Oliver K."/>
            <person name="Palmeiri A."/>
            <person name="Palmer S.A."/>
            <person name="Parker A."/>
            <person name="Patel D."/>
            <person name="Pearce A.V."/>
            <person name="Peck A.I."/>
            <person name="Pelan S."/>
            <person name="Phelps K."/>
            <person name="Phillimore B.J."/>
            <person name="Plumb R."/>
            <person name="Rajan J."/>
            <person name="Raymond C."/>
            <person name="Rouse G."/>
            <person name="Saenphimmachak C."/>
            <person name="Sehra H.K."/>
            <person name="Sheridan E."/>
            <person name="Shownkeen R."/>
            <person name="Sims S."/>
            <person name="Skuce C.D."/>
            <person name="Smith M."/>
            <person name="Steward C."/>
            <person name="Subramanian S."/>
            <person name="Sycamore N."/>
            <person name="Tracey A."/>
            <person name="Tromans A."/>
            <person name="Van Helmond Z."/>
            <person name="Wall M."/>
            <person name="Wallis J.M."/>
            <person name="White S."/>
            <person name="Whitehead S.L."/>
            <person name="Wilkinson J.E."/>
            <person name="Willey D.L."/>
            <person name="Williams H."/>
            <person name="Wilming L."/>
            <person name="Wray P.W."/>
            <person name="Wu Z."/>
            <person name="Coulson A."/>
            <person name="Vaudin M."/>
            <person name="Sulston J.E."/>
            <person name="Durbin R.M."/>
            <person name="Hubbard T."/>
            <person name="Wooster R."/>
            <person name="Dunham I."/>
            <person name="Carter N.P."/>
            <person name="McVean G."/>
            <person name="Ross M.T."/>
            <person name="Harrow J."/>
            <person name="Olson M.V."/>
            <person name="Beck S."/>
            <person name="Rogers J."/>
            <person name="Bentley D.R."/>
        </authorList>
    </citation>
    <scope>NUCLEOTIDE SEQUENCE [LARGE SCALE GENOMIC DNA]</scope>
</reference>
<reference key="5">
    <citation type="journal article" date="2004" name="Genome Res.">
        <title>The status, quality, and expansion of the NIH full-length cDNA project: the Mammalian Gene Collection (MGC).</title>
        <authorList>
            <consortium name="The MGC Project Team"/>
        </authorList>
    </citation>
    <scope>NUCLEOTIDE SEQUENCE [LARGE SCALE MRNA] (ISOFORM 1)</scope>
    <source>
        <tissue>Uterus</tissue>
    </source>
</reference>
<reference key="6">
    <citation type="journal article" date="2011" name="Nature">
        <title>A diverse range of gene products are effectors of the type I interferon antiviral response.</title>
        <authorList>
            <person name="Schoggins J.W."/>
            <person name="Wilson S.J."/>
            <person name="Panis M."/>
            <person name="Murphy M.Y."/>
            <person name="Jones C.T."/>
            <person name="Bieniasz P."/>
            <person name="Rice C.M."/>
        </authorList>
    </citation>
    <scope>FUNCTION</scope>
    <scope>INDUCTION</scope>
</reference>
<reference key="7">
    <citation type="journal article" date="2019" name="J. Virol.">
        <title>Novel Functions of IFI44L as a Feedback Regulator of Host Antiviral Responses.</title>
        <authorList>
            <person name="DeDiego M.L."/>
            <person name="Martinez-Sobrido L."/>
            <person name="Topham D.J."/>
        </authorList>
    </citation>
    <scope>FUNCTION</scope>
    <scope>INTERACTION WITH FKBP5</scope>
</reference>
<reference key="8">
    <citation type="journal article" date="2020" name="J. Virol.">
        <title>Interferon-Induced Protein 44 and Interferon-Induced Protein 44-Like Restrict Replication of Respiratory Syncytial Virus.</title>
        <authorList>
            <person name="Busse D.C."/>
            <person name="Habgood-Coote D."/>
            <person name="Clare S."/>
            <person name="Brandt C."/>
            <person name="Bassano I."/>
            <person name="Kaforou M."/>
            <person name="Herberg J."/>
            <person name="Levin M."/>
            <person name="Eleouet J.F."/>
            <person name="Kellam P."/>
            <person name="Tregoning J.S."/>
        </authorList>
    </citation>
    <scope>FUNCTION</scope>
</reference>
<reference key="9">
    <citation type="journal article" date="2021" name="J. Immunol. Res.">
        <title>IFI44L as a Forward Regulator Enhancing Host Antituberculosis Responses.</title>
        <authorList>
            <person name="Jiang H."/>
            <person name="Tsang L."/>
            <person name="Wang H."/>
            <person name="Liu C."/>
        </authorList>
    </citation>
    <scope>FUNCTION</scope>
    <scope>INDUCTION BY M.TUBERCULOSIS INFECTION</scope>
</reference>
<protein>
    <recommendedName>
        <fullName>Interferon-induced protein 44-like</fullName>
    </recommendedName>
</protein>
<name>IF44L_HUMAN</name>
<dbReference type="EMBL" id="AB000115">
    <property type="protein sequence ID" value="BAA19056.1"/>
    <property type="status" value="ALT_FRAME"/>
    <property type="molecule type" value="mRNA"/>
</dbReference>
<dbReference type="EMBL" id="AK223087">
    <property type="protein sequence ID" value="BAD96807.1"/>
    <property type="status" value="ALT_INIT"/>
    <property type="molecule type" value="mRNA"/>
</dbReference>
<dbReference type="EMBL" id="AL832618">
    <property type="protein sequence ID" value="CAD90004.1"/>
    <property type="molecule type" value="mRNA"/>
</dbReference>
<dbReference type="EMBL" id="AC104837">
    <property type="status" value="NOT_ANNOTATED_CDS"/>
    <property type="molecule type" value="Genomic_DNA"/>
</dbReference>
<dbReference type="EMBL" id="BC015932">
    <property type="protein sequence ID" value="AAH15932.1"/>
    <property type="status" value="ALT_INIT"/>
    <property type="molecule type" value="mRNA"/>
</dbReference>
<dbReference type="CCDS" id="CCDS687.2">
    <molecule id="Q53G44-1"/>
</dbReference>
<dbReference type="RefSeq" id="NP_001362575.1">
    <molecule id="Q53G44-1"/>
    <property type="nucleotide sequence ID" value="NM_001375646.1"/>
</dbReference>
<dbReference type="RefSeq" id="NP_006811.2">
    <molecule id="Q53G44-1"/>
    <property type="nucleotide sequence ID" value="NM_006820.4"/>
</dbReference>
<dbReference type="RefSeq" id="XP_011538841.1">
    <property type="nucleotide sequence ID" value="XM_011540539.2"/>
</dbReference>
<dbReference type="BioGRID" id="116163">
    <property type="interactions" value="11"/>
</dbReference>
<dbReference type="FunCoup" id="Q53G44">
    <property type="interactions" value="26"/>
</dbReference>
<dbReference type="IntAct" id="Q53G44">
    <property type="interactions" value="1"/>
</dbReference>
<dbReference type="STRING" id="9606.ENSP00000359787"/>
<dbReference type="GlyGen" id="Q53G44">
    <property type="glycosylation" value="1 site, 1 O-linked glycan (1 site)"/>
</dbReference>
<dbReference type="iPTMnet" id="Q53G44"/>
<dbReference type="PhosphoSitePlus" id="Q53G44"/>
<dbReference type="BioMuta" id="IFI44L"/>
<dbReference type="DMDM" id="224471886"/>
<dbReference type="jPOST" id="Q53G44"/>
<dbReference type="MassIVE" id="Q53G44"/>
<dbReference type="PaxDb" id="9606-ENSP00000359787"/>
<dbReference type="PeptideAtlas" id="Q53G44"/>
<dbReference type="ProteomicsDB" id="62472">
    <molecule id="Q53G44-1"/>
</dbReference>
<dbReference type="ProteomicsDB" id="62473">
    <molecule id="Q53G44-2"/>
</dbReference>
<dbReference type="Antibodypedia" id="33500">
    <property type="antibodies" value="122 antibodies from 20 providers"/>
</dbReference>
<dbReference type="DNASU" id="10964"/>
<dbReference type="Ensembl" id="ENST00000370751.10">
    <molecule id="Q53G44-1"/>
    <property type="protein sequence ID" value="ENSP00000359787.4"/>
    <property type="gene ID" value="ENSG00000137959.17"/>
</dbReference>
<dbReference type="GeneID" id="10964"/>
<dbReference type="KEGG" id="hsa:10964"/>
<dbReference type="MANE-Select" id="ENST00000370751.10">
    <property type="protein sequence ID" value="ENSP00000359787.4"/>
    <property type="RefSeq nucleotide sequence ID" value="NM_006820.4"/>
    <property type="RefSeq protein sequence ID" value="NP_006811.2"/>
</dbReference>
<dbReference type="UCSC" id="uc010oro.2">
    <molecule id="Q53G44-1"/>
    <property type="organism name" value="human"/>
</dbReference>
<dbReference type="AGR" id="HGNC:17817"/>
<dbReference type="CTD" id="10964"/>
<dbReference type="DisGeNET" id="10964"/>
<dbReference type="GeneCards" id="IFI44L"/>
<dbReference type="HGNC" id="HGNC:17817">
    <property type="gene designation" value="IFI44L"/>
</dbReference>
<dbReference type="HPA" id="ENSG00000137959">
    <property type="expression patterns" value="Tissue enhanced (salivary)"/>
</dbReference>
<dbReference type="MIM" id="613975">
    <property type="type" value="gene"/>
</dbReference>
<dbReference type="neXtProt" id="NX_Q53G44"/>
<dbReference type="OpenTargets" id="ENSG00000137959"/>
<dbReference type="PharmGKB" id="PA25615"/>
<dbReference type="VEuPathDB" id="HostDB:ENSG00000137959"/>
<dbReference type="eggNOG" id="ENOG502QQ57">
    <property type="taxonomic scope" value="Eukaryota"/>
</dbReference>
<dbReference type="GeneTree" id="ENSGT00940000163189"/>
<dbReference type="HOGENOM" id="CLU_049888_3_0_1"/>
<dbReference type="InParanoid" id="Q53G44"/>
<dbReference type="OMA" id="TRLTWNE"/>
<dbReference type="OrthoDB" id="25620at2759"/>
<dbReference type="PAN-GO" id="Q53G44">
    <property type="GO annotations" value="1 GO annotation based on evolutionary models"/>
</dbReference>
<dbReference type="PhylomeDB" id="Q53G44"/>
<dbReference type="TreeFam" id="TF328728"/>
<dbReference type="PathwayCommons" id="Q53G44"/>
<dbReference type="Reactome" id="R-HSA-9909505">
    <property type="pathway name" value="Modulation of host responses by IFN-stimulated genes"/>
</dbReference>
<dbReference type="SignaLink" id="Q53G44"/>
<dbReference type="BioGRID-ORCS" id="10964">
    <property type="hits" value="12 hits in 1149 CRISPR screens"/>
</dbReference>
<dbReference type="ChiTaRS" id="IFI44L">
    <property type="organism name" value="human"/>
</dbReference>
<dbReference type="GenomeRNAi" id="10964"/>
<dbReference type="Pharos" id="Q53G44">
    <property type="development level" value="Tbio"/>
</dbReference>
<dbReference type="PRO" id="PR:Q53G44"/>
<dbReference type="Proteomes" id="UP000005640">
    <property type="component" value="Chromosome 1"/>
</dbReference>
<dbReference type="RNAct" id="Q53G44">
    <property type="molecule type" value="protein"/>
</dbReference>
<dbReference type="Bgee" id="ENSG00000137959">
    <property type="expression patterns" value="Expressed in monocyte and 188 other cell types or tissues"/>
</dbReference>
<dbReference type="ExpressionAtlas" id="Q53G44">
    <property type="expression patterns" value="baseline and differential"/>
</dbReference>
<dbReference type="GO" id="GO:0005829">
    <property type="term" value="C:cytosol"/>
    <property type="evidence" value="ECO:0000304"/>
    <property type="project" value="Reactome"/>
</dbReference>
<dbReference type="GO" id="GO:0051607">
    <property type="term" value="P:defense response to virus"/>
    <property type="evidence" value="ECO:0000314"/>
    <property type="project" value="UniProtKB"/>
</dbReference>
<dbReference type="GO" id="GO:0006955">
    <property type="term" value="P:immune response"/>
    <property type="evidence" value="ECO:0000318"/>
    <property type="project" value="GO_Central"/>
</dbReference>
<dbReference type="CDD" id="cd00882">
    <property type="entry name" value="Ras_like_GTPase"/>
    <property type="match status" value="1"/>
</dbReference>
<dbReference type="FunFam" id="3.40.50.300:FF:001534">
    <property type="entry name" value="Interferon induced protein 44 like"/>
    <property type="match status" value="1"/>
</dbReference>
<dbReference type="Gene3D" id="3.40.50.300">
    <property type="entry name" value="P-loop containing nucleotide triphosphate hydrolases"/>
    <property type="match status" value="1"/>
</dbReference>
<dbReference type="InterPro" id="IPR027417">
    <property type="entry name" value="P-loop_NTPase"/>
</dbReference>
<dbReference type="InterPro" id="IPR006571">
    <property type="entry name" value="TLDc_dom"/>
</dbReference>
<dbReference type="PANTHER" id="PTHR14241">
    <property type="entry name" value="INTERFERON-INDUCED PROTEIN 44"/>
    <property type="match status" value="1"/>
</dbReference>
<dbReference type="PANTHER" id="PTHR14241:SF2">
    <property type="entry name" value="INTERFERON-INDUCED PROTEIN 44-LIKE"/>
    <property type="match status" value="1"/>
</dbReference>
<dbReference type="SUPFAM" id="SSF52540">
    <property type="entry name" value="P-loop containing nucleoside triphosphate hydrolases"/>
    <property type="match status" value="1"/>
</dbReference>
<dbReference type="PROSITE" id="PS51886">
    <property type="entry name" value="TLDC"/>
    <property type="match status" value="1"/>
</dbReference>
<gene>
    <name type="primary">IFI44L</name>
    <name type="synonym">C1orf29</name>
    <name type="ORF">GS3686</name>
</gene>
<evidence type="ECO:0000255" key="1">
    <source>
        <dbReference type="PROSITE-ProRule" id="PRU01234"/>
    </source>
</evidence>
<evidence type="ECO:0000269" key="2">
    <source>
    </source>
</evidence>
<evidence type="ECO:0000269" key="3">
    <source>
    </source>
</evidence>
<evidence type="ECO:0000269" key="4">
    <source>
    </source>
</evidence>
<evidence type="ECO:0000269" key="5">
    <source>
    </source>
</evidence>
<evidence type="ECO:0000269" key="6">
    <source>
    </source>
</evidence>
<evidence type="ECO:0000269" key="7">
    <source ref="1"/>
</evidence>
<evidence type="ECO:0000269" key="8">
    <source ref="2"/>
</evidence>
<evidence type="ECO:0000303" key="9">
    <source>
    </source>
</evidence>
<evidence type="ECO:0000305" key="10"/>
<comment type="function">
    <text evidence="3 4 5 6">Type I interferon-stimulated gene (ISG) that plays a critical role in antiviral and antibacterial activity (PubMed:34722780). During bacterial infection, promotes macrophage differentiation and facilitates inflammatory cytokine secretion (PubMed:34722780). Plays a role in the control of respiratory syncytial virus/RSV infection, reducing the ability of the virus to replicate (PubMed:32611756). Exhibits a low antiviral activity against hepatitis C virus (PubMed:21478870). Also acts as a feedback regulator of IFN responses by negatively regulating IKBKB and IKBKE kinase activities through interaction with FKBP5 (PubMed:31434731).</text>
</comment>
<comment type="subunit">
    <text evidence="4">Interacts with FKBP5; this interaction modulates IKBKB and IKBKE kinase activities.</text>
</comment>
<comment type="subcellular location">
    <subcellularLocation>
        <location evidence="10">Cytoplasm</location>
    </subcellularLocation>
</comment>
<comment type="alternative products">
    <event type="alternative splicing"/>
    <isoform>
        <id>Q53G44-1</id>
        <name>1</name>
        <sequence type="displayed"/>
    </isoform>
    <isoform>
        <id>Q53G44-2</id>
        <name>2</name>
        <sequence type="described" ref="VSP_036554 VSP_036555"/>
    </isoform>
</comment>
<comment type="induction">
    <text evidence="3 6">By type I interferons (PubMed:21478870). By M.tuberculosis infection (PubMed:34722780).</text>
</comment>
<comment type="similarity">
    <text evidence="10">Belongs to the IFI44 family.</text>
</comment>
<comment type="sequence caution" evidence="10">
    <conflict type="erroneous initiation">
        <sequence resource="EMBL-CDS" id="AAH15932"/>
    </conflict>
</comment>
<comment type="sequence caution" evidence="10">
    <conflict type="frameshift">
        <sequence resource="EMBL-CDS" id="BAA19056"/>
    </conflict>
</comment>
<comment type="sequence caution" evidence="10">
    <conflict type="erroneous initiation">
        <sequence resource="EMBL-CDS" id="BAD96807"/>
    </conflict>
</comment>
<feature type="chain" id="PRO_0000337845" description="Interferon-induced protein 44-like">
    <location>
        <begin position="1"/>
        <end position="452"/>
    </location>
</feature>
<feature type="domain" description="TLDc" evidence="1">
    <location>
        <begin position="1"/>
        <end position="159"/>
    </location>
</feature>
<feature type="splice variant" id="VSP_036554" description="In isoform 2." evidence="9">
    <original>I</original>
    <variation>M</variation>
    <location>
        <position position="161"/>
    </location>
</feature>
<feature type="splice variant" id="VSP_036555" description="In isoform 2." evidence="9">
    <location>
        <begin position="162"/>
        <end position="452"/>
    </location>
</feature>
<feature type="sequence variant" id="VAR_054648" description="In dbSNP:rs273259." evidence="2 7 8">
    <original>H</original>
    <variation>R</variation>
    <location>
        <position position="73"/>
    </location>
</feature>
<feature type="sequence variant" id="VAR_054649" description="In dbSNP:rs34932081.">
    <original>A</original>
    <variation>T</variation>
    <location>
        <position position="104"/>
    </location>
</feature>
<feature type="sequence variant" id="VAR_054650" description="In dbSNP:rs273258.">
    <original>R</original>
    <variation>C</variation>
    <location>
        <position position="148"/>
    </location>
</feature>
<feature type="sequence variant" id="VAR_054651" description="In dbSNP:rs3820093." evidence="8">
    <original>V</original>
    <variation>I</variation>
    <location>
        <position position="217"/>
    </location>
</feature>
<feature type="sequence variant" id="VAR_054652" description="In dbSNP:rs987495." evidence="7">
    <original>I</original>
    <variation>T</variation>
    <location>
        <position position="235"/>
    </location>
</feature>
<feature type="sequence variant" id="VAR_054653" description="In dbSNP:rs1981071." evidence="8">
    <original>R</original>
    <variation>C</variation>
    <location>
        <position position="296"/>
    </location>
</feature>
<feature type="sequence variant" id="VAR_043726" description="In dbSNP:rs35466823.">
    <original>M</original>
    <variation>I</variation>
    <location>
        <position position="390"/>
    </location>
</feature>
<feature type="sequence conflict" description="In Ref. 3; CAD90004." evidence="10" ref="3">
    <original>A</original>
    <variation>V</variation>
    <location>
        <position position="54"/>
    </location>
</feature>
<feature type="sequence conflict" description="In Ref. 3; CAD90004." evidence="10" ref="3">
    <original>E</original>
    <variation>G</variation>
    <location>
        <position position="154"/>
    </location>
</feature>
<accession>Q53G44</accession>
<accession>Q86TE1</accession>
<accession>Q96B64</accession>
<accession>Q99984</accession>
<organism>
    <name type="scientific">Homo sapiens</name>
    <name type="common">Human</name>
    <dbReference type="NCBI Taxonomy" id="9606"/>
    <lineage>
        <taxon>Eukaryota</taxon>
        <taxon>Metazoa</taxon>
        <taxon>Chordata</taxon>
        <taxon>Craniata</taxon>
        <taxon>Vertebrata</taxon>
        <taxon>Euteleostomi</taxon>
        <taxon>Mammalia</taxon>
        <taxon>Eutheria</taxon>
        <taxon>Euarchontoglires</taxon>
        <taxon>Primates</taxon>
        <taxon>Haplorrhini</taxon>
        <taxon>Catarrhini</taxon>
        <taxon>Hominidae</taxon>
        <taxon>Homo</taxon>
    </lineage>
</organism>
<proteinExistence type="evidence at protein level"/>
<keyword id="KW-0025">Alternative splicing</keyword>
<keyword id="KW-0051">Antiviral defense</keyword>
<keyword id="KW-0963">Cytoplasm</keyword>
<keyword id="KW-1267">Proteomics identification</keyword>
<keyword id="KW-1185">Reference proteome</keyword>